<reference key="1">
    <citation type="journal article" date="2006" name="Nat. Biotechnol.">
        <title>Complete genome of the mutualistic, N2-fixing grass endophyte Azoarcus sp. strain BH72.</title>
        <authorList>
            <person name="Krause A."/>
            <person name="Ramakumar A."/>
            <person name="Bartels D."/>
            <person name="Battistoni F."/>
            <person name="Bekel T."/>
            <person name="Boch J."/>
            <person name="Boehm M."/>
            <person name="Friedrich F."/>
            <person name="Hurek T."/>
            <person name="Krause L."/>
            <person name="Linke B."/>
            <person name="McHardy A.C."/>
            <person name="Sarkar A."/>
            <person name="Schneiker S."/>
            <person name="Syed A.A."/>
            <person name="Thauer R."/>
            <person name="Vorhoelter F.-J."/>
            <person name="Weidner S."/>
            <person name="Puehler A."/>
            <person name="Reinhold-Hurek B."/>
            <person name="Kaiser O."/>
            <person name="Goesmann A."/>
        </authorList>
    </citation>
    <scope>NUCLEOTIDE SEQUENCE [LARGE SCALE GENOMIC DNA]</scope>
    <source>
        <strain>BH72</strain>
    </source>
</reference>
<accession>A1K4J7</accession>
<dbReference type="EMBL" id="AM406670">
    <property type="protein sequence ID" value="CAL93752.1"/>
    <property type="molecule type" value="Genomic_DNA"/>
</dbReference>
<dbReference type="RefSeq" id="WP_004258834.1">
    <property type="nucleotide sequence ID" value="NZ_CP016210.1"/>
</dbReference>
<dbReference type="SMR" id="A1K4J7"/>
<dbReference type="STRING" id="62928.azo1135"/>
<dbReference type="KEGG" id="aoa:dqs_1246"/>
<dbReference type="KEGG" id="azo:azo1135"/>
<dbReference type="eggNOG" id="COG0267">
    <property type="taxonomic scope" value="Bacteria"/>
</dbReference>
<dbReference type="HOGENOM" id="CLU_190949_1_1_4"/>
<dbReference type="OrthoDB" id="21586at2"/>
<dbReference type="Proteomes" id="UP000002588">
    <property type="component" value="Chromosome"/>
</dbReference>
<dbReference type="GO" id="GO:0022625">
    <property type="term" value="C:cytosolic large ribosomal subunit"/>
    <property type="evidence" value="ECO:0007669"/>
    <property type="project" value="TreeGrafter"/>
</dbReference>
<dbReference type="GO" id="GO:0003735">
    <property type="term" value="F:structural constituent of ribosome"/>
    <property type="evidence" value="ECO:0007669"/>
    <property type="project" value="InterPro"/>
</dbReference>
<dbReference type="GO" id="GO:0006412">
    <property type="term" value="P:translation"/>
    <property type="evidence" value="ECO:0007669"/>
    <property type="project" value="UniProtKB-UniRule"/>
</dbReference>
<dbReference type="FunFam" id="2.20.28.120:FF:000001">
    <property type="entry name" value="50S ribosomal protein L33"/>
    <property type="match status" value="1"/>
</dbReference>
<dbReference type="Gene3D" id="2.20.28.120">
    <property type="entry name" value="Ribosomal protein L33"/>
    <property type="match status" value="1"/>
</dbReference>
<dbReference type="HAMAP" id="MF_00294">
    <property type="entry name" value="Ribosomal_bL33"/>
    <property type="match status" value="1"/>
</dbReference>
<dbReference type="InterPro" id="IPR001705">
    <property type="entry name" value="Ribosomal_bL33"/>
</dbReference>
<dbReference type="InterPro" id="IPR018264">
    <property type="entry name" value="Ribosomal_bL33_CS"/>
</dbReference>
<dbReference type="InterPro" id="IPR038584">
    <property type="entry name" value="Ribosomal_bL33_sf"/>
</dbReference>
<dbReference type="InterPro" id="IPR011332">
    <property type="entry name" value="Ribosomal_zn-bd"/>
</dbReference>
<dbReference type="NCBIfam" id="NF001860">
    <property type="entry name" value="PRK00595.1"/>
    <property type="match status" value="1"/>
</dbReference>
<dbReference type="NCBIfam" id="TIGR01023">
    <property type="entry name" value="rpmG_bact"/>
    <property type="match status" value="1"/>
</dbReference>
<dbReference type="PANTHER" id="PTHR15238">
    <property type="entry name" value="54S RIBOSOMAL PROTEIN L39, MITOCHONDRIAL"/>
    <property type="match status" value="1"/>
</dbReference>
<dbReference type="PANTHER" id="PTHR15238:SF1">
    <property type="entry name" value="LARGE RIBOSOMAL SUBUNIT PROTEIN BL33M"/>
    <property type="match status" value="1"/>
</dbReference>
<dbReference type="Pfam" id="PF00471">
    <property type="entry name" value="Ribosomal_L33"/>
    <property type="match status" value="1"/>
</dbReference>
<dbReference type="SUPFAM" id="SSF57829">
    <property type="entry name" value="Zn-binding ribosomal proteins"/>
    <property type="match status" value="1"/>
</dbReference>
<dbReference type="PROSITE" id="PS00582">
    <property type="entry name" value="RIBOSOMAL_L33"/>
    <property type="match status" value="1"/>
</dbReference>
<keyword id="KW-1185">Reference proteome</keyword>
<keyword id="KW-0687">Ribonucleoprotein</keyword>
<keyword id="KW-0689">Ribosomal protein</keyword>
<gene>
    <name evidence="1" type="primary">rpmG</name>
    <name type="ordered locus">azo1135</name>
</gene>
<organism>
    <name type="scientific">Azoarcus sp. (strain BH72)</name>
    <dbReference type="NCBI Taxonomy" id="418699"/>
    <lineage>
        <taxon>Bacteria</taxon>
        <taxon>Pseudomonadati</taxon>
        <taxon>Pseudomonadota</taxon>
        <taxon>Betaproteobacteria</taxon>
        <taxon>Rhodocyclales</taxon>
        <taxon>Zoogloeaceae</taxon>
        <taxon>Azoarcus</taxon>
    </lineage>
</organism>
<sequence>MAKGIREKIKLESTAGTGHFYTTSKNKRTTPEKLEFNKYDPVARKHVPYKEVKLK</sequence>
<protein>
    <recommendedName>
        <fullName evidence="1">Large ribosomal subunit protein bL33</fullName>
    </recommendedName>
    <alternativeName>
        <fullName evidence="2">50S ribosomal protein L33</fullName>
    </alternativeName>
</protein>
<name>RL33_AZOSB</name>
<evidence type="ECO:0000255" key="1">
    <source>
        <dbReference type="HAMAP-Rule" id="MF_00294"/>
    </source>
</evidence>
<evidence type="ECO:0000305" key="2"/>
<comment type="similarity">
    <text evidence="1">Belongs to the bacterial ribosomal protein bL33 family.</text>
</comment>
<feature type="chain" id="PRO_1000004143" description="Large ribosomal subunit protein bL33">
    <location>
        <begin position="1"/>
        <end position="55"/>
    </location>
</feature>
<proteinExistence type="inferred from homology"/>